<gene>
    <name evidence="2 5" type="primary">drpB</name>
    <name type="synonym">yedR</name>
    <name type="ordered locus">b1963</name>
    <name type="ordered locus">JW1946</name>
</gene>
<protein>
    <recommendedName>
        <fullName evidence="2 5">Cell division protein DrpB</fullName>
    </recommendedName>
    <alternativeName>
        <fullName evidence="2 5">Division ring protein B</fullName>
    </alternativeName>
</protein>
<feature type="chain" id="PRO_0000169101" description="Cell division protein DrpB">
    <location>
        <begin position="1"/>
        <end position="100"/>
    </location>
</feature>
<feature type="topological domain" description="Cytoplasmic" evidence="1">
    <location>
        <begin position="1"/>
        <end position="16"/>
    </location>
</feature>
<feature type="transmembrane region" description="Helical" evidence="2">
    <location>
        <begin position="17"/>
        <end position="37"/>
    </location>
</feature>
<feature type="topological domain" description="Periplasmic" evidence="1">
    <location>
        <begin position="38"/>
        <end position="64"/>
    </location>
</feature>
<feature type="transmembrane region" description="Helical" evidence="2">
    <location>
        <begin position="65"/>
        <end position="85"/>
    </location>
</feature>
<feature type="topological domain" description="Cytoplasmic" evidence="3">
    <location>
        <begin position="86"/>
        <end position="100"/>
    </location>
</feature>
<proteinExistence type="evidence at protein level"/>
<dbReference type="EMBL" id="U00096">
    <property type="protein sequence ID" value="AAC75029.3"/>
    <property type="molecule type" value="Genomic_DNA"/>
</dbReference>
<dbReference type="EMBL" id="AP009048">
    <property type="protein sequence ID" value="BAE76557.1"/>
    <property type="status" value="ALT_INIT"/>
    <property type="molecule type" value="Genomic_DNA"/>
</dbReference>
<dbReference type="PIR" id="G64960">
    <property type="entry name" value="G64960"/>
</dbReference>
<dbReference type="RefSeq" id="NP_416472.2">
    <property type="nucleotide sequence ID" value="NC_000913.3"/>
</dbReference>
<dbReference type="BioGRID" id="4260864">
    <property type="interactions" value="148"/>
</dbReference>
<dbReference type="BioGRID" id="850828">
    <property type="interactions" value="1"/>
</dbReference>
<dbReference type="DIP" id="DIP-11849N"/>
<dbReference type="FunCoup" id="P76334">
    <property type="interactions" value="12"/>
</dbReference>
<dbReference type="IntAct" id="P76334">
    <property type="interactions" value="1"/>
</dbReference>
<dbReference type="STRING" id="511145.b1963"/>
<dbReference type="PaxDb" id="511145-b1963"/>
<dbReference type="DNASU" id="946477"/>
<dbReference type="EnsemblBacteria" id="AAC75029">
    <property type="protein sequence ID" value="AAC75029"/>
    <property type="gene ID" value="b1963"/>
</dbReference>
<dbReference type="GeneID" id="946477"/>
<dbReference type="KEGG" id="ecj:JW1946"/>
<dbReference type="KEGG" id="eco:b1963"/>
<dbReference type="KEGG" id="ecoc:C3026_11100"/>
<dbReference type="PATRIC" id="fig|511145.12.peg.2042"/>
<dbReference type="EchoBASE" id="EB3795"/>
<dbReference type="eggNOG" id="ENOG5032VGN">
    <property type="taxonomic scope" value="Bacteria"/>
</dbReference>
<dbReference type="HOGENOM" id="CLU_168880_1_0_6"/>
<dbReference type="InParanoid" id="P76334"/>
<dbReference type="PhylomeDB" id="P76334"/>
<dbReference type="BioCyc" id="EcoCyc:G7051-MONOMER"/>
<dbReference type="PRO" id="PR:P76334"/>
<dbReference type="Proteomes" id="UP000000625">
    <property type="component" value="Chromosome"/>
</dbReference>
<dbReference type="GO" id="GO:0032153">
    <property type="term" value="C:cell division site"/>
    <property type="evidence" value="ECO:0000314"/>
    <property type="project" value="EcoCyc"/>
</dbReference>
<dbReference type="GO" id="GO:0005886">
    <property type="term" value="C:plasma membrane"/>
    <property type="evidence" value="ECO:0000314"/>
    <property type="project" value="EcoCyc"/>
</dbReference>
<dbReference type="GO" id="GO:0043093">
    <property type="term" value="P:FtsZ-dependent cytokinesis"/>
    <property type="evidence" value="ECO:0000316"/>
    <property type="project" value="EcoCyc"/>
</dbReference>
<dbReference type="HAMAP" id="MF_00857">
    <property type="entry name" value="DrpB"/>
    <property type="match status" value="1"/>
</dbReference>
<dbReference type="InterPro" id="IPR046385">
    <property type="entry name" value="DrpB"/>
</dbReference>
<dbReference type="NCBIfam" id="NF038392">
    <property type="entry name" value="div_DrpB_YedR"/>
    <property type="match status" value="1"/>
</dbReference>
<comment type="function">
    <text evidence="2">A non-essential division protein that localizes to the septal ring in low ionic strength medium.</text>
</comment>
<comment type="function">
    <text evidence="4">Localizes to the septal ring in about 30% of observed cells before cell constriction occurs; localization occurs in low ionic strength medium (0 NaCl) and requires FtsZ but not FtsEX. Overexpression partially restores correct FtsI localization to the division septum in an ftsEX deletion. Isolated as a multicopy suppressor of an ftsEX deletion mutant; it does not suppress other cell division defects (e.g. ftsA, ftsI, ftsQ or ftsZ).</text>
</comment>
<comment type="subunit">
    <text evidence="4">Bacterial adenylate cyclase hybrid (BACTH) studies show interaction of this protein with DamX, FtsI, FtsN, FtsQ, YmgF, DedD, FtsA and MalF, as well as weaker interactions with DedD, MalG and PBP2, but this assay often generates false positive results.</text>
</comment>
<comment type="subcellular location">
    <subcellularLocation>
        <location evidence="2 3">Cell inner membrane</location>
        <topology evidence="2 6">Multi-pass membrane protein</topology>
    </subcellularLocation>
    <text evidence="2 4">Localizes to the septal ring before constriction, only when cells are grown at low ionic strength.</text>
</comment>
<comment type="induction">
    <text evidence="4">Constitutively expressed at low levels in mid log phase, in high (10 g/ml NaCl) and low (0 g/ml NaCl) ionic strength medium (at protein level).</text>
</comment>
<comment type="disruption phenotype">
    <text evidence="4">No visible phenotype in rich, rich without NaCl or minimal medium. Double dedD-drpB deletion mutants grow 1000-fold less well at 42 degrees Celsius and are filamentous when grown on LB, no effect is seen in low ionic strength medium; few septa are observed.</text>
</comment>
<comment type="similarity">
    <text evidence="2">Belongs to the DrpB family.</text>
</comment>
<comment type="sequence caution" evidence="4">
    <conflict type="erroneous initiation">
        <sequence resource="EMBL-CDS" id="BAE76557"/>
    </conflict>
    <text>Extended N-terminus.</text>
</comment>
<reference key="1">
    <citation type="journal article" date="1997" name="Science">
        <title>The complete genome sequence of Escherichia coli K-12.</title>
        <authorList>
            <person name="Blattner F.R."/>
            <person name="Plunkett G. III"/>
            <person name="Bloch C.A."/>
            <person name="Perna N.T."/>
            <person name="Burland V."/>
            <person name="Riley M."/>
            <person name="Collado-Vides J."/>
            <person name="Glasner J.D."/>
            <person name="Rode C.K."/>
            <person name="Mayhew G.F."/>
            <person name="Gregor J."/>
            <person name="Davis N.W."/>
            <person name="Kirkpatrick H.A."/>
            <person name="Goeden M.A."/>
            <person name="Rose D.J."/>
            <person name="Mau B."/>
            <person name="Shao Y."/>
        </authorList>
    </citation>
    <scope>NUCLEOTIDE SEQUENCE [LARGE SCALE GENOMIC DNA]</scope>
    <source>
        <strain>K12 / MG1655 / ATCC 47076</strain>
    </source>
</reference>
<reference key="2">
    <citation type="journal article" date="2006" name="Mol. Syst. Biol.">
        <title>Highly accurate genome sequences of Escherichia coli K-12 strains MG1655 and W3110.</title>
        <authorList>
            <person name="Hayashi K."/>
            <person name="Morooka N."/>
            <person name="Yamamoto Y."/>
            <person name="Fujita K."/>
            <person name="Isono K."/>
            <person name="Choi S."/>
            <person name="Ohtsubo E."/>
            <person name="Baba T."/>
            <person name="Wanner B.L."/>
            <person name="Mori H."/>
            <person name="Horiuchi T."/>
        </authorList>
    </citation>
    <scope>NUCLEOTIDE SEQUENCE [LARGE SCALE GENOMIC DNA]</scope>
    <source>
        <strain>K12 / W3110 / ATCC 27325 / DSM 5911</strain>
    </source>
</reference>
<reference key="3">
    <citation type="journal article" date="2005" name="Science">
        <title>Global topology analysis of the Escherichia coli inner membrane proteome.</title>
        <authorList>
            <person name="Daley D.O."/>
            <person name="Rapp M."/>
            <person name="Granseth E."/>
            <person name="Melen K."/>
            <person name="Drew D."/>
            <person name="von Heijne G."/>
        </authorList>
    </citation>
    <scope>SUBCELLULAR LOCATION</scope>
    <scope>TOPOLOGY [LARGE SCALE ANALYSIS]</scope>
    <source>
        <strain>K12 / MG1655 / ATCC 47076</strain>
    </source>
</reference>
<reference key="4">
    <citation type="journal article" date="2020" name="J. Bacteriol.">
        <title>DrpB (YedR) is a non-essential cell division protein in Escherichia coli.</title>
        <authorList>
            <person name="Yahashiri A."/>
            <person name="Babor J.T."/>
            <person name="Anwar A.L."/>
            <person name="Bezy R.P."/>
            <person name="Piette E.W."/>
            <person name="Ryan Arends S.J."/>
            <person name="Mueh U."/>
            <person name="Steffen M.R."/>
            <person name="Cline J.M."/>
            <person name="Stanek D.N."/>
            <person name="Lister S.D."/>
            <person name="Swanson S.M."/>
            <person name="Weiss D.S."/>
        </authorList>
    </citation>
    <scope>FUNCTION</scope>
    <scope>SEQUENCE REVISION TO N-TERMINUS</scope>
    <scope>SUBUNIT</scope>
    <scope>SUBCELLULAR LOCATION</scope>
    <scope>INDUCTION</scope>
    <scope>DISRUPTION PHENOTYPE</scope>
    <source>
        <strain>K12 / MG1655 / ATCC 47076</strain>
    </source>
</reference>
<accession>P76334</accession>
<accession>Q2MAZ9</accession>
<evidence type="ECO:0000255" key="1"/>
<evidence type="ECO:0000255" key="2">
    <source>
        <dbReference type="HAMAP-Rule" id="MF_00857"/>
    </source>
</evidence>
<evidence type="ECO:0000269" key="3">
    <source>
    </source>
</evidence>
<evidence type="ECO:0000269" key="4">
    <source>
    </source>
</evidence>
<evidence type="ECO:0000303" key="5">
    <source>
    </source>
</evidence>
<evidence type="ECO:0000305" key="6">
    <source>
    </source>
</evidence>
<keyword id="KW-0131">Cell cycle</keyword>
<keyword id="KW-0132">Cell division</keyword>
<keyword id="KW-0997">Cell inner membrane</keyword>
<keyword id="KW-1003">Cell membrane</keyword>
<keyword id="KW-0472">Membrane</keyword>
<keyword id="KW-1185">Reference proteome</keyword>
<keyword id="KW-0812">Transmembrane</keyword>
<keyword id="KW-1133">Transmembrane helix</keyword>
<name>DRPB_ECOLI</name>
<sequence length="100" mass="11325">MEYGSTKMEERLSRSPGGKLALWAFYTWCGYFVWAMARYIWVMSRIPDAPVSGFESDLGSTAGKWLGALVGFLFMALVGALLGSIAWYTRPRPARSRRYE</sequence>
<organism>
    <name type="scientific">Escherichia coli (strain K12)</name>
    <dbReference type="NCBI Taxonomy" id="83333"/>
    <lineage>
        <taxon>Bacteria</taxon>
        <taxon>Pseudomonadati</taxon>
        <taxon>Pseudomonadota</taxon>
        <taxon>Gammaproteobacteria</taxon>
        <taxon>Enterobacterales</taxon>
        <taxon>Enterobacteriaceae</taxon>
        <taxon>Escherichia</taxon>
    </lineage>
</organism>